<proteinExistence type="inferred from homology"/>
<gene>
    <name evidence="1" type="primary">rutE</name>
    <name type="ordered locus">ECIAI39_2147</name>
</gene>
<sequence length="196" mass="21597">MNEAVSPGALSTLFTDARTHNGWRETPVSDETLREIYALMKWGPTSANCSPARIVFIRTAEGKERLRPALSSGNLQKTLTAPVTAIVAWDSEFYERLPQLFPHGDARSWFTSSPQLAEETAFRNSSMQAAYLIVACRALGLDTGPMSGFDRQHVDDAFFTGSTLKSNLLINIGYGDSSKLYARLPRLSFEEACGLL</sequence>
<feature type="chain" id="PRO_1000138691" description="Probable malonic semialdehyde reductase RutE">
    <location>
        <begin position="1"/>
        <end position="196"/>
    </location>
</feature>
<dbReference type="EC" id="1.1.1.298" evidence="1"/>
<dbReference type="EMBL" id="CU928164">
    <property type="protein sequence ID" value="CAR18274.1"/>
    <property type="molecule type" value="Genomic_DNA"/>
</dbReference>
<dbReference type="RefSeq" id="WP_001001172.1">
    <property type="nucleotide sequence ID" value="NC_011750.1"/>
</dbReference>
<dbReference type="RefSeq" id="YP_002408110.1">
    <property type="nucleotide sequence ID" value="NC_011750.1"/>
</dbReference>
<dbReference type="SMR" id="B7NLB8"/>
<dbReference type="STRING" id="585057.ECIAI39_2147"/>
<dbReference type="KEGG" id="ect:ECIAI39_2147"/>
<dbReference type="PATRIC" id="fig|585057.6.peg.2235"/>
<dbReference type="HOGENOM" id="CLU_084441_0_0_6"/>
<dbReference type="Proteomes" id="UP000000749">
    <property type="component" value="Chromosome"/>
</dbReference>
<dbReference type="GO" id="GO:0035527">
    <property type="term" value="F:3-hydroxypropionate dehydrogenase (NADP+) activity"/>
    <property type="evidence" value="ECO:0007669"/>
    <property type="project" value="UniProtKB-UniRule"/>
</dbReference>
<dbReference type="GO" id="GO:0019740">
    <property type="term" value="P:nitrogen utilization"/>
    <property type="evidence" value="ECO:0007669"/>
    <property type="project" value="UniProtKB-UniRule"/>
</dbReference>
<dbReference type="GO" id="GO:0006212">
    <property type="term" value="P:uracil catabolic process"/>
    <property type="evidence" value="ECO:0007669"/>
    <property type="project" value="UniProtKB-UniRule"/>
</dbReference>
<dbReference type="CDD" id="cd02148">
    <property type="entry name" value="RutE-like"/>
    <property type="match status" value="1"/>
</dbReference>
<dbReference type="FunFam" id="3.40.109.10:FF:000003">
    <property type="entry name" value="Probable malonic semialdehyde reductase RutE"/>
    <property type="match status" value="1"/>
</dbReference>
<dbReference type="Gene3D" id="3.40.109.10">
    <property type="entry name" value="NADH Oxidase"/>
    <property type="match status" value="1"/>
</dbReference>
<dbReference type="HAMAP" id="MF_01204">
    <property type="entry name" value="Oxidoreductase_RutE_HadB"/>
    <property type="match status" value="1"/>
</dbReference>
<dbReference type="InterPro" id="IPR029479">
    <property type="entry name" value="Nitroreductase"/>
</dbReference>
<dbReference type="InterPro" id="IPR000415">
    <property type="entry name" value="Nitroreductase-like"/>
</dbReference>
<dbReference type="InterPro" id="IPR050461">
    <property type="entry name" value="Nitroreductase_HadB/RutE"/>
</dbReference>
<dbReference type="InterPro" id="IPR023936">
    <property type="entry name" value="RutE-like"/>
</dbReference>
<dbReference type="NCBIfam" id="NF003768">
    <property type="entry name" value="PRK05365.1"/>
    <property type="match status" value="1"/>
</dbReference>
<dbReference type="PANTHER" id="PTHR43543">
    <property type="entry name" value="MALONIC SEMIALDEHYDE REDUCTASE RUTE-RELATED"/>
    <property type="match status" value="1"/>
</dbReference>
<dbReference type="PANTHER" id="PTHR43543:SF1">
    <property type="entry name" value="MALONIC SEMIALDEHYDE REDUCTASE RUTE-RELATED"/>
    <property type="match status" value="1"/>
</dbReference>
<dbReference type="Pfam" id="PF00881">
    <property type="entry name" value="Nitroreductase"/>
    <property type="match status" value="1"/>
</dbReference>
<dbReference type="SUPFAM" id="SSF55469">
    <property type="entry name" value="FMN-dependent nitroreductase-like"/>
    <property type="match status" value="1"/>
</dbReference>
<evidence type="ECO:0000255" key="1">
    <source>
        <dbReference type="HAMAP-Rule" id="MF_01204"/>
    </source>
</evidence>
<reference key="1">
    <citation type="journal article" date="2009" name="PLoS Genet.">
        <title>Organised genome dynamics in the Escherichia coli species results in highly diverse adaptive paths.</title>
        <authorList>
            <person name="Touchon M."/>
            <person name="Hoede C."/>
            <person name="Tenaillon O."/>
            <person name="Barbe V."/>
            <person name="Baeriswyl S."/>
            <person name="Bidet P."/>
            <person name="Bingen E."/>
            <person name="Bonacorsi S."/>
            <person name="Bouchier C."/>
            <person name="Bouvet O."/>
            <person name="Calteau A."/>
            <person name="Chiapello H."/>
            <person name="Clermont O."/>
            <person name="Cruveiller S."/>
            <person name="Danchin A."/>
            <person name="Diard M."/>
            <person name="Dossat C."/>
            <person name="Karoui M.E."/>
            <person name="Frapy E."/>
            <person name="Garry L."/>
            <person name="Ghigo J.M."/>
            <person name="Gilles A.M."/>
            <person name="Johnson J."/>
            <person name="Le Bouguenec C."/>
            <person name="Lescat M."/>
            <person name="Mangenot S."/>
            <person name="Martinez-Jehanne V."/>
            <person name="Matic I."/>
            <person name="Nassif X."/>
            <person name="Oztas S."/>
            <person name="Petit M.A."/>
            <person name="Pichon C."/>
            <person name="Rouy Z."/>
            <person name="Ruf C.S."/>
            <person name="Schneider D."/>
            <person name="Tourret J."/>
            <person name="Vacherie B."/>
            <person name="Vallenet D."/>
            <person name="Medigue C."/>
            <person name="Rocha E.P.C."/>
            <person name="Denamur E."/>
        </authorList>
    </citation>
    <scope>NUCLEOTIDE SEQUENCE [LARGE SCALE GENOMIC DNA]</scope>
    <source>
        <strain>IAI39 / ExPEC</strain>
    </source>
</reference>
<comment type="function">
    <text evidence="1">May reduce toxic product malonic semialdehyde to 3-hydroxypropionic acid, which is excreted.</text>
</comment>
<comment type="catalytic activity">
    <reaction evidence="1">
        <text>3-hydroxypropanoate + NADP(+) = 3-oxopropanoate + NADPH + H(+)</text>
        <dbReference type="Rhea" id="RHEA:26438"/>
        <dbReference type="ChEBI" id="CHEBI:15378"/>
        <dbReference type="ChEBI" id="CHEBI:16510"/>
        <dbReference type="ChEBI" id="CHEBI:33190"/>
        <dbReference type="ChEBI" id="CHEBI:57783"/>
        <dbReference type="ChEBI" id="CHEBI:58349"/>
        <dbReference type="EC" id="1.1.1.298"/>
    </reaction>
</comment>
<comment type="cofactor">
    <cofactor evidence="1">
        <name>FMN</name>
        <dbReference type="ChEBI" id="CHEBI:58210"/>
    </cofactor>
</comment>
<comment type="induction">
    <text evidence="1">Up-regulated by the nitrogen regulatory protein C (NtrC also called GlnG) and repressed by RutR.</text>
</comment>
<comment type="similarity">
    <text evidence="1">Belongs to the nitroreductase family. HadB/RutE subfamily.</text>
</comment>
<organism>
    <name type="scientific">Escherichia coli O7:K1 (strain IAI39 / ExPEC)</name>
    <dbReference type="NCBI Taxonomy" id="585057"/>
    <lineage>
        <taxon>Bacteria</taxon>
        <taxon>Pseudomonadati</taxon>
        <taxon>Pseudomonadota</taxon>
        <taxon>Gammaproteobacteria</taxon>
        <taxon>Enterobacterales</taxon>
        <taxon>Enterobacteriaceae</taxon>
        <taxon>Escherichia</taxon>
    </lineage>
</organism>
<accession>B7NLB8</accession>
<protein>
    <recommendedName>
        <fullName evidence="1">Probable malonic semialdehyde reductase RutE</fullName>
        <ecNumber evidence="1">1.1.1.298</ecNumber>
    </recommendedName>
</protein>
<name>RUTE_ECO7I</name>
<keyword id="KW-0285">Flavoprotein</keyword>
<keyword id="KW-0288">FMN</keyword>
<keyword id="KW-0520">NAD</keyword>
<keyword id="KW-0521">NADP</keyword>
<keyword id="KW-0560">Oxidoreductase</keyword>